<feature type="chain" id="PRO_0000461495" description="Terpene cyclase-glycosyl transferase fusion protein fsoA">
    <location>
        <begin position="1"/>
        <end position="1338"/>
    </location>
</feature>
<feature type="repeat" description="PFTB 1" evidence="2">
    <location>
        <begin position="19"/>
        <end position="61"/>
    </location>
</feature>
<feature type="repeat" description="PFTB 2" evidence="2">
    <location>
        <begin position="69"/>
        <end position="111"/>
    </location>
</feature>
<feature type="repeat" description="PFTB 3" evidence="2">
    <location>
        <begin position="267"/>
        <end position="307"/>
    </location>
</feature>
<feature type="repeat" description="PFTB 4" evidence="2">
    <location>
        <begin position="434"/>
        <end position="475"/>
    </location>
</feature>
<feature type="repeat" description="PFTB 5" evidence="2">
    <location>
        <begin position="515"/>
        <end position="556"/>
    </location>
</feature>
<feature type="repeat" description="PFTB 6" evidence="2">
    <location>
        <begin position="564"/>
        <end position="615"/>
    </location>
</feature>
<feature type="region of interest" description="Terpenne cyclase" evidence="6">
    <location>
        <begin position="1"/>
        <end position="687"/>
    </location>
</feature>
<feature type="region of interest" description="Glycosyltransferase" evidence="6">
    <location>
        <begin position="688"/>
        <end position="1338"/>
    </location>
</feature>
<feature type="active site" description="Proton donor" evidence="1">
    <location>
        <position position="412"/>
    </location>
</feature>
<feature type="site" description="Transition state stabilizer" evidence="1">
    <location>
        <position position="338"/>
    </location>
</feature>
<feature type="site" description="Transition state stabilizer" evidence="1">
    <location>
        <position position="401"/>
    </location>
</feature>
<feature type="site" description="Transition state stabilizer" evidence="1">
    <location>
        <position position="536"/>
    </location>
</feature>
<evidence type="ECO:0000250" key="1">
    <source>
        <dbReference type="UniProtKB" id="P48449"/>
    </source>
</evidence>
<evidence type="ECO:0000255" key="2"/>
<evidence type="ECO:0000269" key="3">
    <source>
    </source>
</evidence>
<evidence type="ECO:0000303" key="4">
    <source>
    </source>
</evidence>
<evidence type="ECO:0000305" key="5"/>
<evidence type="ECO:0000305" key="6">
    <source>
    </source>
</evidence>
<protein>
    <recommendedName>
        <fullName evidence="4">Terpene cyclase-glycosyl transferase fusion protein fsoA</fullName>
    </recommendedName>
    <alternativeName>
        <fullName evidence="4">Fuscoatroside biosynthesis cluster protein A</fullName>
    </alternativeName>
    <domain>
        <recommendedName>
            <fullName evidence="4">Terpene cyclase</fullName>
            <ecNumber evidence="3">5.4.99.-</ecNumber>
        </recommendedName>
    </domain>
    <domain>
        <recommendedName>
            <fullName evidence="4">Glycosyl transferase</fullName>
            <ecNumber evidence="3">2.4.1.-</ecNumber>
        </recommendedName>
    </domain>
</protein>
<sequence>MDMAPDELDELRGSAQRALEQAIDFSFSCQQDDGHWVAPVSADATFTAQYVMFKHAIPALNLDISGAEAAALRHWLLGDQNAAEGSWGLAPGLPGNLSTTVEAYLALRLLGVPSSNPALQQARRFVLAHGGISRVRFFTRFFLATFGLFPWSAIPQMPAELILMPKWAPLNIYVLSSWARSTLIPILVVRHHEPLYPLPNAQSDPNSGFLDELWLDPTNKEVPFAPPLWDMFHGRDRDVVKLAFTLGDKALAQIGGLKKGPQRRLALRRCIEWLLEHQEETGDWAGFFPPMHGSVWALLLEGFSLEHDVVKRGLEALERLAVNDESGKWLQSTVSPCWDTALMVKALCDAGLGLGGAEAAKGNRHARVTTAVDWVRSLQLLGPQGDWRVYSRNQRPGGWSFEYNNTWYPDVDDTAVVVMMLVTHDPAAVESNAVEMGIEWILGMQNHDGGWGAFDTNNDALWLHKIPFSDMDSLVDPSTSDVTGRMLECFGMLLTHRKGGLRLRPELSQRLHESAQKALAFLFREQTASGAWWGRWGCNYNYGTTNVLRGLPAFCGDKEVARAALRAVLWLEKCQNKDGGWGETLLSYGHPDLAGKGPSTAAHTAWALDALLRFRPASDPALQKGVQWLVSNQVPKTEEKRHWASWPSDLYVGTGFPNVLYLGYPFYHHHFAISALARFLDRTDEPDQDRDLPLLMTRHVVTTLTRHDILLMVLGSRGDIDVFLSIAGKLAKNRHRVRVATHPAHQQLVEAHGFEFYDVGGGPDEFAQVLGREPNLLWSVIRGDLGRLRQSLCRTFARFWEAGYGSNNTRNARNADPKANGIADSRPFVADLIVSTPATTVHVHAAETLRAPLVLIAAQPTLPTREFPHVFTMNKPRYSPGSWWNYATFFFLELLNWLAMGSFVNKLRVHTYKMKPLCWVWATQDFLTAKIPLVCLWSSNVVPRPPEWHDEVMVAGSTTLAQVDQFTPPLSLLEFLNADMEKPTVVVSFGSMFIADPPALISAIASAAAQVRAKVVICRSWRWKLESSLASLPSHTYVADAIPHSWLLPRVDGFVHHGGAGHTAAGLRAGVPMLITPFFLDQHFWAAKVHNLGLGPEPLEIMMRAGTVAGIQTHQGKMQFAQSMQDLLSGQYSRRCAEMSERVRAETDGANVAADVIERELGSALARSGHCAVVPALPAQWQHAESGLALCGVAAASLVTSGMLDWDDLDAITRIDWIARRQKDPKSRLHAICFVADWLGHAFGMLLAVAGWLLQLVGDVRSVGRVKPHHNTDPIRLAMMERSMFDLNFAKQGLAEAELKGGAFEELLARRWRAAVAAAFERRMERTGNMLLGEGCQG</sequence>
<reference key="1">
    <citation type="journal article" date="2024" name="J. Am. Chem. Soc.">
        <title>Biosynthesis of Enfumafungin-type Antibiotic Reveals an Unusual Enzymatic Fusion Pattern and Unprecedented C-C Bond Cleavage.</title>
        <authorList>
            <person name="Cao Z.Q."/>
            <person name="Wang G.Q."/>
            <person name="Luo R."/>
            <person name="Gao Y.H."/>
            <person name="Lv J.M."/>
            <person name="Qin S.Y."/>
            <person name="Chen G.D."/>
            <person name="Awakawa T."/>
            <person name="Bao X.F."/>
            <person name="Mei Q.H."/>
            <person name="Yao X.S."/>
            <person name="Hu D."/>
            <person name="Abe I."/>
            <person name="Gao H."/>
        </authorList>
    </citation>
    <scope>NUCLEOTIDE SEQUENCE [GENOMIC DNA]</scope>
    <scope>FUNCTION</scope>
    <scope>CATALYTIC ACTIVITY</scope>
    <scope>PATHWAY</scope>
    <scope>BIOTECHNOLOGY</scope>
</reference>
<gene>
    <name evidence="4" type="primary">fsoA</name>
</gene>
<keyword id="KW-0413">Isomerase</keyword>
<keyword id="KW-0677">Repeat</keyword>
<keyword id="KW-0808">Transferase</keyword>
<accession>P9WEH1</accession>
<organism>
    <name type="scientific">Humicola fuscoatra</name>
    <dbReference type="NCBI Taxonomy" id="112175"/>
    <lineage>
        <taxon>Eukaryota</taxon>
        <taxon>Fungi</taxon>
        <taxon>Dikarya</taxon>
        <taxon>Ascomycota</taxon>
        <taxon>Pezizomycotina</taxon>
        <taxon>Sordariomycetes</taxon>
        <taxon>Sordariomycetidae</taxon>
        <taxon>Sordariales</taxon>
        <taxon>Chaetomiaceae</taxon>
        <taxon>Humicola</taxon>
    </lineage>
</organism>
<dbReference type="EC" id="5.4.99.-" evidence="3"/>
<dbReference type="EC" id="2.4.1.-" evidence="3"/>
<dbReference type="EMBL" id="OR962264">
    <property type="protein sequence ID" value="XAF84278.1"/>
    <property type="molecule type" value="Genomic_DNA"/>
</dbReference>
<dbReference type="SMR" id="P9WEH1"/>
<dbReference type="UniPathway" id="UPA00213"/>
<dbReference type="GO" id="GO:0005811">
    <property type="term" value="C:lipid droplet"/>
    <property type="evidence" value="ECO:0007669"/>
    <property type="project" value="InterPro"/>
</dbReference>
<dbReference type="GO" id="GO:0016866">
    <property type="term" value="F:intramolecular transferase activity"/>
    <property type="evidence" value="ECO:0007669"/>
    <property type="project" value="InterPro"/>
</dbReference>
<dbReference type="GO" id="GO:0016906">
    <property type="term" value="F:sterol 3-beta-glucosyltransferase activity"/>
    <property type="evidence" value="ECO:0007669"/>
    <property type="project" value="UniProtKB-ARBA"/>
</dbReference>
<dbReference type="GO" id="GO:0005975">
    <property type="term" value="P:carbohydrate metabolic process"/>
    <property type="evidence" value="ECO:0007669"/>
    <property type="project" value="InterPro"/>
</dbReference>
<dbReference type="GO" id="GO:0030259">
    <property type="term" value="P:lipid glycosylation"/>
    <property type="evidence" value="ECO:0007669"/>
    <property type="project" value="InterPro"/>
</dbReference>
<dbReference type="GO" id="GO:0016104">
    <property type="term" value="P:triterpenoid biosynthetic process"/>
    <property type="evidence" value="ECO:0007669"/>
    <property type="project" value="InterPro"/>
</dbReference>
<dbReference type="CDD" id="cd03784">
    <property type="entry name" value="GT1_Gtf-like"/>
    <property type="match status" value="1"/>
</dbReference>
<dbReference type="FunFam" id="3.40.50.2000:FF:000009">
    <property type="entry name" value="Sterol 3-beta-glucosyltransferase UGT80A2"/>
    <property type="match status" value="1"/>
</dbReference>
<dbReference type="Gene3D" id="1.50.10.20">
    <property type="match status" value="2"/>
</dbReference>
<dbReference type="Gene3D" id="3.40.50.2000">
    <property type="entry name" value="Glycogen Phosphorylase B"/>
    <property type="match status" value="2"/>
</dbReference>
<dbReference type="InterPro" id="IPR010610">
    <property type="entry name" value="EryCIII-like_C"/>
</dbReference>
<dbReference type="InterPro" id="IPR050426">
    <property type="entry name" value="Glycosyltransferase_28"/>
</dbReference>
<dbReference type="InterPro" id="IPR004276">
    <property type="entry name" value="GlycoTrans_28_N"/>
</dbReference>
<dbReference type="InterPro" id="IPR006400">
    <property type="entry name" value="Hopene-cyclase"/>
</dbReference>
<dbReference type="InterPro" id="IPR001330">
    <property type="entry name" value="Prenyltrans"/>
</dbReference>
<dbReference type="InterPro" id="IPR032696">
    <property type="entry name" value="SQ_cyclase_C"/>
</dbReference>
<dbReference type="InterPro" id="IPR032697">
    <property type="entry name" value="SQ_cyclase_N"/>
</dbReference>
<dbReference type="InterPro" id="IPR018333">
    <property type="entry name" value="Squalene_cyclase"/>
</dbReference>
<dbReference type="InterPro" id="IPR008930">
    <property type="entry name" value="Terpenoid_cyclase/PrenylTrfase"/>
</dbReference>
<dbReference type="InterPro" id="IPR002213">
    <property type="entry name" value="UDP_glucos_trans"/>
</dbReference>
<dbReference type="NCBIfam" id="TIGR01507">
    <property type="entry name" value="hopene_cyclase"/>
    <property type="match status" value="1"/>
</dbReference>
<dbReference type="NCBIfam" id="TIGR01787">
    <property type="entry name" value="squalene_cyclas"/>
    <property type="match status" value="1"/>
</dbReference>
<dbReference type="PANTHER" id="PTHR48050">
    <property type="entry name" value="STEROL 3-BETA-GLUCOSYLTRANSFERASE"/>
    <property type="match status" value="1"/>
</dbReference>
<dbReference type="PANTHER" id="PTHR48050:SF13">
    <property type="entry name" value="STEROL 3-BETA-GLUCOSYLTRANSFERASE UGT80A2"/>
    <property type="match status" value="1"/>
</dbReference>
<dbReference type="Pfam" id="PF06722">
    <property type="entry name" value="EryCIII-like_C"/>
    <property type="match status" value="1"/>
</dbReference>
<dbReference type="Pfam" id="PF03033">
    <property type="entry name" value="Glyco_transf_28"/>
    <property type="match status" value="1"/>
</dbReference>
<dbReference type="Pfam" id="PF00432">
    <property type="entry name" value="Prenyltrans"/>
    <property type="match status" value="1"/>
</dbReference>
<dbReference type="Pfam" id="PF13243">
    <property type="entry name" value="SQHop_cyclase_C"/>
    <property type="match status" value="1"/>
</dbReference>
<dbReference type="Pfam" id="PF13249">
    <property type="entry name" value="SQHop_cyclase_N"/>
    <property type="match status" value="1"/>
</dbReference>
<dbReference type="SFLD" id="SFLDG01016">
    <property type="entry name" value="Prenyltransferase_Like_2"/>
    <property type="match status" value="1"/>
</dbReference>
<dbReference type="SUPFAM" id="SSF48239">
    <property type="entry name" value="Terpenoid cyclases/Protein prenyltransferases"/>
    <property type="match status" value="2"/>
</dbReference>
<dbReference type="SUPFAM" id="SSF53756">
    <property type="entry name" value="UDP-Glycosyltransferase/glycogen phosphorylase"/>
    <property type="match status" value="1"/>
</dbReference>
<name>FSOA_HUMFU</name>
<proteinExistence type="evidence at protein level"/>
<comment type="function">
    <text evidence="3">Terpene cyclase-glycosyl transferase fusion protein; part of the gene cluster that mediates the biosynthesis of the enfumafungin-type antibiotic, fuscoatroside (PubMed:38654452). Within the pathway, fsoA plays two important roles, the cyclization of 2,3(S)-oxidosqualene into isomotiol via its terpene cyclase (TC) domain and the C3 glycosylation of several intermediates via its glycosyltransferase (GT) domain (PubMed:38654452). The fuscoatroside biosynthesis is initiated by the cyclization of 2,3(S)-oxidosqualene through FsoA's TC domain, leading to the formation of the fernane skeleton isomotiol, harboring a fernane triterpene skeleton with a C8-C9 double bond. Subsequently, C2-alpha-hydroxylation mediated by fsoD results in the production of 2-alpha-hydroxy-isomotiol, which is further acetylated by fsoF. The GT domain of FsoA may convert isomotiol, 2-alpha-hydroxy-isomotiol, and the acetylated derivative of 2-alpha-hydroxy-isomotiol into their corresponding glycosides 3-O-(beta-D-glucopyranosyl)-isomotiol, 3-O-(beta-D-glucopyranosyl)-2-alpha-hydroxy-isomotiol, and 3-O-(beta-D-glucopyranosyl)-2-alpha-acetoxy-isomotiol, which then undergo oxidative cleavage under the action of fsoE to form s 2-deacetoxy-fuscoatroside, 2-deacetyl-fuscoatroside, and fuscoatroside, respectively. Although hydroxylation followed by acetylation of 3-O-(beta-D-glucopyranosyl)-isomotiol and 2-deacetoxy-fuscoatroside by fsoD and fsoF could not be ruled out, this process is likely to occur with difficulty due to bulky steric hindrance caused by the presence of a glycan at C3 in these compounds. Interestingly, fsoE can also utilize the aglycones isomotiol and 2-alpha-hydroxy-isomotiol as substrates to generate 19-beta-hydroxy-isomotiol and 2-alpha,19-beta-dihydroxy-isomotiol, respectively. These reactions occur with lower efficiency. Finally, fsoE can further convert 2-alpha,19-beta-dihydroxy-isomotiol into 2-alpha-hydroxy-ismotiol-19-one and 2-alpha-hydroxy-ismotiol-19-one into 2-deacetyl-3-deglucopyranosyl-fuscoatroside (PubMed:38654452).</text>
</comment>
<comment type="catalytic activity">
    <reaction evidence="3">
        <text>(S)-2,3-epoxysqualene = isomotiol</text>
        <dbReference type="Rhea" id="RHEA:82723"/>
        <dbReference type="ChEBI" id="CHEBI:15441"/>
        <dbReference type="ChEBI" id="CHEBI:232471"/>
    </reaction>
    <physiologicalReaction direction="left-to-right" evidence="3">
        <dbReference type="Rhea" id="RHEA:82724"/>
    </physiologicalReaction>
</comment>
<comment type="catalytic activity">
    <reaction evidence="3">
        <text>isomotiol + UDP-alpha-D-glucose = 3-O-(beta-D-glucopyranosyl)-isomotiol + UDP + H(+)</text>
        <dbReference type="Rhea" id="RHEA:82735"/>
        <dbReference type="ChEBI" id="CHEBI:15378"/>
        <dbReference type="ChEBI" id="CHEBI:58223"/>
        <dbReference type="ChEBI" id="CHEBI:58885"/>
        <dbReference type="ChEBI" id="CHEBI:232471"/>
        <dbReference type="ChEBI" id="CHEBI:232474"/>
    </reaction>
    <physiologicalReaction direction="left-to-right" evidence="3">
        <dbReference type="Rhea" id="RHEA:82736"/>
    </physiologicalReaction>
</comment>
<comment type="catalytic activity">
    <reaction evidence="3">
        <text>2alpha-hydroxyisomotiol + UDP-alpha-D-glucose = 3-O-(beta-D-glucopyranosyl)-2alpha-hydroxyisomotiol + UDP + H(+)</text>
        <dbReference type="Rhea" id="RHEA:82739"/>
        <dbReference type="ChEBI" id="CHEBI:15378"/>
        <dbReference type="ChEBI" id="CHEBI:58223"/>
        <dbReference type="ChEBI" id="CHEBI:58885"/>
        <dbReference type="ChEBI" id="CHEBI:232472"/>
        <dbReference type="ChEBI" id="CHEBI:232475"/>
    </reaction>
    <physiologicalReaction direction="left-to-right" evidence="3">
        <dbReference type="Rhea" id="RHEA:82740"/>
    </physiologicalReaction>
</comment>
<comment type="pathway">
    <text evidence="3">Secondary metabolite biosynthesis; terpenoid biosynthesis.</text>
</comment>
<comment type="biotechnology">
    <text evidence="3">Fuscoatroside and some of its derivatives show interesting antifungal activity against Candida albicans and Aspergillus niger.</text>
</comment>
<comment type="similarity">
    <text evidence="5">In the N-terminal section; belongs to the terpene cyclase/mutase family.</text>
</comment>
<comment type="similarity">
    <text evidence="5">In the C-terminal section; belongs to the glycosyltransferase 28 family.</text>
</comment>